<keyword id="KW-1003">Cell membrane</keyword>
<keyword id="KW-0202">Cytokine</keyword>
<keyword id="KW-1015">Disulfide bond</keyword>
<keyword id="KW-0325">Glycoprotein</keyword>
<keyword id="KW-0472">Membrane</keyword>
<keyword id="KW-1185">Reference proteome</keyword>
<keyword id="KW-0964">Secreted</keyword>
<keyword id="KW-0735">Signal-anchor</keyword>
<keyword id="KW-0812">Transmembrane</keyword>
<keyword id="KW-1133">Transmembrane helix</keyword>
<gene>
    <name type="primary">CD40LG</name>
    <name type="synonym">CD40L</name>
    <name type="synonym">TNFSF5</name>
</gene>
<name>CD40L_CERAT</name>
<sequence length="261" mass="29366">MIETYNQPSPRSAATGLPVRMKIFMYLLTIFLITQMIGSALFAVYLHRRLDKIEDERNLHEDFVFMKTIQRCNTGERSLSLLNCEEIKSQFEGFVKDIMLNKEEKKKENSFEMQKGDQNPQIAAHVISEASSKTTSVLQWAEKGYYTMSNNLVTLENGKQLTVKRQGLYYIYAQVTFCSNREASSQAPFIASLCLKSPGRFERILLRAANTHSSAKPCGQQSIHLGGVFELQPGASVFVNVTDPSQVSHGTGFTSFGLLKL</sequence>
<reference key="1">
    <citation type="journal article" date="2001" name="Immunogenetics">
        <title>Cloning, sequencing, and homology analysis of nonhuman primate Fas/Fas-ligand and co-stimulatory molecules.</title>
        <authorList>
            <person name="Villinger F.J."/>
            <person name="Bostik P."/>
            <person name="Mayne A.E."/>
            <person name="King C.L."/>
            <person name="Genain C.P."/>
            <person name="Weiss W.R."/>
            <person name="Ansari A.A."/>
        </authorList>
    </citation>
    <scope>NUCLEOTIDE SEQUENCE [MRNA]</scope>
    <source>
        <tissue>Lymphocyte</tissue>
    </source>
</reference>
<protein>
    <recommendedName>
        <fullName>CD40 ligand</fullName>
        <shortName>CD40-L</shortName>
    </recommendedName>
    <alternativeName>
        <fullName>Tumor necrosis factor ligand superfamily member 5</fullName>
    </alternativeName>
    <cdAntigenName>CD154</cdAntigenName>
    <component>
        <recommendedName>
            <fullName>CD40 ligand, membrane form</fullName>
        </recommendedName>
    </component>
    <component>
        <recommendedName>
            <fullName evidence="3">CD40 ligand, soluble form</fullName>
            <shortName evidence="3">sCD40L</shortName>
        </recommendedName>
    </component>
</protein>
<evidence type="ECO:0000250" key="1"/>
<evidence type="ECO:0000250" key="2">
    <source>
        <dbReference type="UniProtKB" id="P27548"/>
    </source>
</evidence>
<evidence type="ECO:0000250" key="3">
    <source>
        <dbReference type="UniProtKB" id="P29965"/>
    </source>
</evidence>
<evidence type="ECO:0000255" key="4"/>
<evidence type="ECO:0000255" key="5">
    <source>
        <dbReference type="PROSITE-ProRule" id="PRU01387"/>
    </source>
</evidence>
<evidence type="ECO:0000305" key="6"/>
<organism>
    <name type="scientific">Cercocebus atys</name>
    <name type="common">Sooty mangabey</name>
    <name type="synonym">Cercocebus torquatus atys</name>
    <dbReference type="NCBI Taxonomy" id="9531"/>
    <lineage>
        <taxon>Eukaryota</taxon>
        <taxon>Metazoa</taxon>
        <taxon>Chordata</taxon>
        <taxon>Craniata</taxon>
        <taxon>Vertebrata</taxon>
        <taxon>Euteleostomi</taxon>
        <taxon>Mammalia</taxon>
        <taxon>Eutheria</taxon>
        <taxon>Euarchontoglires</taxon>
        <taxon>Primates</taxon>
        <taxon>Haplorrhini</taxon>
        <taxon>Catarrhini</taxon>
        <taxon>Cercopithecidae</taxon>
        <taxon>Cercopithecinae</taxon>
        <taxon>Cercocebus</taxon>
    </lineage>
</organism>
<dbReference type="EMBL" id="AF344841">
    <property type="protein sequence ID" value="AAK37600.1"/>
    <property type="molecule type" value="mRNA"/>
</dbReference>
<dbReference type="RefSeq" id="NP_001292887.1">
    <property type="nucleotide sequence ID" value="NM_001305958.1"/>
</dbReference>
<dbReference type="SMR" id="P63305"/>
<dbReference type="STRING" id="9531.ENSCATP00000025206"/>
<dbReference type="GlyCosmos" id="P63305">
    <property type="glycosylation" value="1 site, No reported glycans"/>
</dbReference>
<dbReference type="Ensembl" id="ENSCATT00000049436.1">
    <property type="protein sequence ID" value="ENSCATP00000025206.1"/>
    <property type="gene ID" value="ENSCATG00000036087.1"/>
</dbReference>
<dbReference type="GeneID" id="105592681"/>
<dbReference type="CTD" id="959"/>
<dbReference type="GeneTree" id="ENSGT01130000278318"/>
<dbReference type="OMA" id="VSFCTKA"/>
<dbReference type="Proteomes" id="UP000233060">
    <property type="component" value="Unassembled WGS sequence"/>
</dbReference>
<dbReference type="Bgee" id="ENSCATG00000036087">
    <property type="expression patterns" value="Expressed in bone marrow and 3 other cell types or tissues"/>
</dbReference>
<dbReference type="GO" id="GO:0009986">
    <property type="term" value="C:cell surface"/>
    <property type="evidence" value="ECO:0000250"/>
    <property type="project" value="UniProtKB"/>
</dbReference>
<dbReference type="GO" id="GO:0009897">
    <property type="term" value="C:external side of plasma membrane"/>
    <property type="evidence" value="ECO:0007669"/>
    <property type="project" value="Ensembl"/>
</dbReference>
<dbReference type="GO" id="GO:0005615">
    <property type="term" value="C:extracellular space"/>
    <property type="evidence" value="ECO:0007669"/>
    <property type="project" value="UniProtKB-KW"/>
</dbReference>
<dbReference type="GO" id="GO:0005794">
    <property type="term" value="C:Golgi apparatus"/>
    <property type="evidence" value="ECO:0007669"/>
    <property type="project" value="Ensembl"/>
</dbReference>
<dbReference type="GO" id="GO:0005174">
    <property type="term" value="F:CD40 receptor binding"/>
    <property type="evidence" value="ECO:0000250"/>
    <property type="project" value="UniProtKB"/>
</dbReference>
<dbReference type="GO" id="GO:0005125">
    <property type="term" value="F:cytokine activity"/>
    <property type="evidence" value="ECO:0007669"/>
    <property type="project" value="UniProtKB-KW"/>
</dbReference>
<dbReference type="GO" id="GO:0005178">
    <property type="term" value="F:integrin binding"/>
    <property type="evidence" value="ECO:0007669"/>
    <property type="project" value="Ensembl"/>
</dbReference>
<dbReference type="GO" id="GO:0043539">
    <property type="term" value="F:protein serine/threonine kinase activator activity"/>
    <property type="evidence" value="ECO:0000250"/>
    <property type="project" value="UniProtKB"/>
</dbReference>
<dbReference type="GO" id="GO:0005164">
    <property type="term" value="F:tumor necrosis factor receptor binding"/>
    <property type="evidence" value="ECO:0007669"/>
    <property type="project" value="InterPro"/>
</dbReference>
<dbReference type="GO" id="GO:0030183">
    <property type="term" value="P:B cell differentiation"/>
    <property type="evidence" value="ECO:0007669"/>
    <property type="project" value="Ensembl"/>
</dbReference>
<dbReference type="GO" id="GO:0042100">
    <property type="term" value="P:B cell proliferation"/>
    <property type="evidence" value="ECO:0000250"/>
    <property type="project" value="UniProtKB"/>
</dbReference>
<dbReference type="GO" id="GO:0023035">
    <property type="term" value="P:CD40 signaling pathway"/>
    <property type="evidence" value="ECO:0007669"/>
    <property type="project" value="Ensembl"/>
</dbReference>
<dbReference type="GO" id="GO:0006954">
    <property type="term" value="P:inflammatory response"/>
    <property type="evidence" value="ECO:0000250"/>
    <property type="project" value="UniProtKB"/>
</dbReference>
<dbReference type="GO" id="GO:0007229">
    <property type="term" value="P:integrin-mediated signaling pathway"/>
    <property type="evidence" value="ECO:0007669"/>
    <property type="project" value="Ensembl"/>
</dbReference>
<dbReference type="GO" id="GO:0045190">
    <property type="term" value="P:isotype switching"/>
    <property type="evidence" value="ECO:0007669"/>
    <property type="project" value="Ensembl"/>
</dbReference>
<dbReference type="GO" id="GO:0043066">
    <property type="term" value="P:negative regulation of apoptotic process"/>
    <property type="evidence" value="ECO:0007669"/>
    <property type="project" value="Ensembl"/>
</dbReference>
<dbReference type="GO" id="GO:0030168">
    <property type="term" value="P:platelet activation"/>
    <property type="evidence" value="ECO:0000250"/>
    <property type="project" value="UniProtKB"/>
</dbReference>
<dbReference type="GO" id="GO:2000353">
    <property type="term" value="P:positive regulation of endothelial cell apoptotic process"/>
    <property type="evidence" value="ECO:0007669"/>
    <property type="project" value="Ensembl"/>
</dbReference>
<dbReference type="GO" id="GO:0032733">
    <property type="term" value="P:positive regulation of interleukin-10 production"/>
    <property type="evidence" value="ECO:0000250"/>
    <property type="project" value="UniProtKB"/>
</dbReference>
<dbReference type="GO" id="GO:0032735">
    <property type="term" value="P:positive regulation of interleukin-12 production"/>
    <property type="evidence" value="ECO:0007669"/>
    <property type="project" value="Ensembl"/>
</dbReference>
<dbReference type="GO" id="GO:0032753">
    <property type="term" value="P:positive regulation of interleukin-4 production"/>
    <property type="evidence" value="ECO:0000250"/>
    <property type="project" value="UniProtKB"/>
</dbReference>
<dbReference type="GO" id="GO:0051092">
    <property type="term" value="P:positive regulation of NF-kappaB transcription factor activity"/>
    <property type="evidence" value="ECO:0000250"/>
    <property type="project" value="UniProtKB"/>
</dbReference>
<dbReference type="GO" id="GO:0042102">
    <property type="term" value="P:positive regulation of T cell proliferation"/>
    <property type="evidence" value="ECO:0000250"/>
    <property type="project" value="UniProtKB"/>
</dbReference>
<dbReference type="GO" id="GO:0002637">
    <property type="term" value="P:regulation of immunoglobulin production"/>
    <property type="evidence" value="ECO:0007669"/>
    <property type="project" value="Ensembl"/>
</dbReference>
<dbReference type="CDD" id="cd00184">
    <property type="entry name" value="TNF"/>
    <property type="match status" value="1"/>
</dbReference>
<dbReference type="FunFam" id="2.60.120.40:FF:000013">
    <property type="entry name" value="CD40 ligand"/>
    <property type="match status" value="1"/>
</dbReference>
<dbReference type="Gene3D" id="2.60.120.40">
    <property type="match status" value="1"/>
</dbReference>
<dbReference type="InterPro" id="IPR003263">
    <property type="entry name" value="CD40L"/>
</dbReference>
<dbReference type="InterPro" id="IPR021184">
    <property type="entry name" value="TNF_CS"/>
</dbReference>
<dbReference type="InterPro" id="IPR006052">
    <property type="entry name" value="TNF_dom"/>
</dbReference>
<dbReference type="InterPro" id="IPR008983">
    <property type="entry name" value="Tumour_necrosis_fac-like_dom"/>
</dbReference>
<dbReference type="PANTHER" id="PTHR11471:SF5">
    <property type="entry name" value="CD40 LIGAND"/>
    <property type="match status" value="1"/>
</dbReference>
<dbReference type="PANTHER" id="PTHR11471">
    <property type="entry name" value="TUMOR NECROSIS FACTOR FAMILY MEMBER"/>
    <property type="match status" value="1"/>
</dbReference>
<dbReference type="Pfam" id="PF00229">
    <property type="entry name" value="TNF"/>
    <property type="match status" value="1"/>
</dbReference>
<dbReference type="PIRSF" id="PIRSF016527">
    <property type="entry name" value="TNF_5"/>
    <property type="match status" value="1"/>
</dbReference>
<dbReference type="PRINTS" id="PR01702">
    <property type="entry name" value="CD40LIGAND"/>
</dbReference>
<dbReference type="SMART" id="SM00207">
    <property type="entry name" value="TNF"/>
    <property type="match status" value="1"/>
</dbReference>
<dbReference type="SUPFAM" id="SSF49842">
    <property type="entry name" value="TNF-like"/>
    <property type="match status" value="1"/>
</dbReference>
<dbReference type="PROSITE" id="PS00251">
    <property type="entry name" value="THD_1"/>
    <property type="match status" value="1"/>
</dbReference>
<dbReference type="PROSITE" id="PS50049">
    <property type="entry name" value="THD_2"/>
    <property type="match status" value="1"/>
</dbReference>
<proteinExistence type="evidence at transcript level"/>
<accession>P63305</accession>
<accession>Q9BDC7</accession>
<comment type="function">
    <text evidence="2 3">Cytokine that acts as a ligand to CD40/TNFRSF5 (By similarity). Costimulates T-cell proliferation and cytokine production (By similarity). Its cross-linking on T-cells generates a costimulatory signal which enhances the production of IL4 and IL10 in conjunction with the TCR/CD3 ligation and CD28 costimulation (By similarity). Induces the activation of NF-kappa-B (By similarity). Induces the activation of kinases MAPK8 and PAK2 in T-cells (By similarity). Mediates B-cell proliferation in the absence of co-stimulus as well as IgE production in the presence of IL4 (By similarity). Involved in immunoglobulin class switching (By similarity).</text>
</comment>
<comment type="function">
    <molecule>CD40 ligand, soluble form</molecule>
    <text evidence="3">Acts as a ligand for integrins, specifically ITGA5:ITGB1 and ITGAV:ITGB3; both integrins and the CD40 receptor are required for activation of CD40-CD40LG signaling, which have cell-type dependent effects, such as B-cell activation, NF-kappa-B signaling and anti-apoptotic signaling.</text>
</comment>
<comment type="subunit">
    <text evidence="3">Homotrimer (By similarity). Interacts with CD28 (By similarity). CD40 ligand, soluble form: Exists as either a monomer or a homotrimer (By similarity). Forms a ternary complex between CD40 and integrins for CD40-CD40LG signaling (By similarity).</text>
</comment>
<comment type="subcellular location">
    <subcellularLocation>
        <location evidence="3">Cell membrane</location>
        <topology evidence="3">Single-pass type II membrane protein</topology>
    </subcellularLocation>
    <subcellularLocation>
        <location evidence="3">Cell surface</location>
    </subcellularLocation>
</comment>
<comment type="subcellular location">
    <molecule>CD40 ligand, soluble form</molecule>
    <subcellularLocation>
        <location evidence="3">Secreted</location>
    </subcellularLocation>
    <text evidence="3">Release of soluble CD40L from platelets is partially regulated by GP IIb/IIIa, actin polymerization, and a matrix metalloproteinases (MMP) inhibitor-sensitive pathway.</text>
</comment>
<comment type="PTM">
    <text evidence="3">The soluble form derives from the membrane form by proteolytic processing.</text>
</comment>
<comment type="similarity">
    <text evidence="6">Belongs to the tumor necrosis factor family.</text>
</comment>
<feature type="chain" id="PRO_0000034480" description="CD40 ligand, membrane form">
    <location>
        <begin position="1"/>
        <end position="261"/>
    </location>
</feature>
<feature type="chain" id="PRO_0000034481" description="CD40 ligand, soluble form" evidence="3">
    <location>
        <begin position="113"/>
        <end position="261"/>
    </location>
</feature>
<feature type="topological domain" description="Cytoplasmic" evidence="4">
    <location>
        <begin position="1"/>
        <end position="22"/>
    </location>
</feature>
<feature type="transmembrane region" description="Helical; Signal-anchor for type II membrane protein" evidence="4">
    <location>
        <begin position="23"/>
        <end position="43"/>
    </location>
</feature>
<feature type="topological domain" description="Extracellular" evidence="4">
    <location>
        <begin position="44"/>
        <end position="261"/>
    </location>
</feature>
<feature type="domain" description="THD" evidence="5">
    <location>
        <begin position="122"/>
        <end position="261"/>
    </location>
</feature>
<feature type="site" description="Cleavage" evidence="1">
    <location>
        <begin position="112"/>
        <end position="113"/>
    </location>
</feature>
<feature type="glycosylation site" description="N-linked (GlcNAc...) asparagine" evidence="4">
    <location>
        <position position="240"/>
    </location>
</feature>
<feature type="disulfide bond" evidence="5">
    <location>
        <begin position="178"/>
        <end position="218"/>
    </location>
</feature>